<sequence length="419" mass="47219">MSGNSSTDMYLFKKSLKELKGKKGKGTELISVYVPAGRRLSDISQYLRQELSQSSNIKSKTTMKNVQSAIEVILQRLKLLKEPLEMGVIIFAGMIPRGGPGTEKMEVYVLEPPEPVKTFVYRCDSLFYTDPLEDFIQDTEVYGVILVDRNEATIGTVKGKTITVLKKLTSGVPGKFKAGGQSARRLERLIDDAAHQFMVRIGEYATESFMPILEEKKLKGLLLGGPGNTKNEFAEKDYLHHELKKKIIDTFDLCYTEEFGIRELLDKASDLLRDLDLMKEKNLIQRFFKELIKDDGGLSAYGEAQVMKYLEMGAIDTLIVTEDIGITRVTIKCNNCDYTQEVNVKTNEMFKFEEQLKTKACPTCGGAMYIDEEKDIIEHLSDLCNVHNTDIIVVSTDTEEGSQISRAFKGMAAILRYKL</sequence>
<protein>
    <recommendedName>
        <fullName evidence="1">Peptide chain release factor subunit 1</fullName>
    </recommendedName>
    <alternativeName>
        <fullName evidence="1">Translation termination factor aRF1</fullName>
    </alternativeName>
</protein>
<organism>
    <name type="scientific">Methanococcus maripaludis (strain C6 / ATCC BAA-1332)</name>
    <dbReference type="NCBI Taxonomy" id="444158"/>
    <lineage>
        <taxon>Archaea</taxon>
        <taxon>Methanobacteriati</taxon>
        <taxon>Methanobacteriota</taxon>
        <taxon>Methanomada group</taxon>
        <taxon>Methanococci</taxon>
        <taxon>Methanococcales</taxon>
        <taxon>Methanococcaceae</taxon>
        <taxon>Methanococcus</taxon>
    </lineage>
</organism>
<dbReference type="EMBL" id="CP000867">
    <property type="protein sequence ID" value="ABX02348.1"/>
    <property type="molecule type" value="Genomic_DNA"/>
</dbReference>
<dbReference type="SMR" id="A9AAH5"/>
<dbReference type="STRING" id="444158.MmarC6_1536"/>
<dbReference type="KEGG" id="mmx:MmarC6_1536"/>
<dbReference type="eggNOG" id="arCOG01742">
    <property type="taxonomic scope" value="Archaea"/>
</dbReference>
<dbReference type="HOGENOM" id="CLU_035759_3_0_2"/>
<dbReference type="OrthoDB" id="1011at2157"/>
<dbReference type="PhylomeDB" id="A9AAH5"/>
<dbReference type="GO" id="GO:0005737">
    <property type="term" value="C:cytoplasm"/>
    <property type="evidence" value="ECO:0007669"/>
    <property type="project" value="UniProtKB-SubCell"/>
</dbReference>
<dbReference type="GO" id="GO:0016149">
    <property type="term" value="F:translation release factor activity, codon specific"/>
    <property type="evidence" value="ECO:0007669"/>
    <property type="project" value="UniProtKB-UniRule"/>
</dbReference>
<dbReference type="FunFam" id="3.30.1330.30:FF:000032">
    <property type="entry name" value="Eukaryotic peptide chain release factor subunit 1"/>
    <property type="match status" value="1"/>
</dbReference>
<dbReference type="FunFam" id="3.30.420.60:FF:000003">
    <property type="entry name" value="Peptide chain release factor subunit 1"/>
    <property type="match status" value="1"/>
</dbReference>
<dbReference type="FunFam" id="3.30.960.10:FF:000003">
    <property type="entry name" value="Peptide chain release factor subunit 1"/>
    <property type="match status" value="1"/>
</dbReference>
<dbReference type="Gene3D" id="1.20.5.170">
    <property type="match status" value="1"/>
</dbReference>
<dbReference type="Gene3D" id="3.30.1330.30">
    <property type="match status" value="1"/>
</dbReference>
<dbReference type="Gene3D" id="3.30.960.10">
    <property type="entry name" value="eRF1 domain 1"/>
    <property type="match status" value="1"/>
</dbReference>
<dbReference type="Gene3D" id="3.30.420.60">
    <property type="entry name" value="eRF1 domain 2"/>
    <property type="match status" value="1"/>
</dbReference>
<dbReference type="HAMAP" id="MF_00424">
    <property type="entry name" value="Rel_fact_arch_1"/>
    <property type="match status" value="1"/>
</dbReference>
<dbReference type="InterPro" id="IPR042226">
    <property type="entry name" value="eFR1_2_sf"/>
</dbReference>
<dbReference type="InterPro" id="IPR005140">
    <property type="entry name" value="eRF1_1_Pelota"/>
</dbReference>
<dbReference type="InterPro" id="IPR024049">
    <property type="entry name" value="eRF1_1_sf"/>
</dbReference>
<dbReference type="InterPro" id="IPR005141">
    <property type="entry name" value="eRF1_2"/>
</dbReference>
<dbReference type="InterPro" id="IPR005142">
    <property type="entry name" value="eRF1_3"/>
</dbReference>
<dbReference type="InterPro" id="IPR020918">
    <property type="entry name" value="Peptide_chain-rel_aRF1"/>
</dbReference>
<dbReference type="InterPro" id="IPR004403">
    <property type="entry name" value="Peptide_chain-rel_eRF1/aRF1"/>
</dbReference>
<dbReference type="InterPro" id="IPR029064">
    <property type="entry name" value="Ribosomal_eL30-like_sf"/>
</dbReference>
<dbReference type="NCBIfam" id="TIGR03676">
    <property type="entry name" value="aRF1_eRF1"/>
    <property type="match status" value="1"/>
</dbReference>
<dbReference type="PANTHER" id="PTHR10113">
    <property type="entry name" value="PEPTIDE CHAIN RELEASE FACTOR SUBUNIT 1"/>
    <property type="match status" value="1"/>
</dbReference>
<dbReference type="Pfam" id="PF03463">
    <property type="entry name" value="eRF1_1"/>
    <property type="match status" value="1"/>
</dbReference>
<dbReference type="Pfam" id="PF03464">
    <property type="entry name" value="eRF1_2"/>
    <property type="match status" value="1"/>
</dbReference>
<dbReference type="Pfam" id="PF03465">
    <property type="entry name" value="eRF1_3"/>
    <property type="match status" value="1"/>
</dbReference>
<dbReference type="SMART" id="SM01194">
    <property type="entry name" value="eRF1_1"/>
    <property type="match status" value="1"/>
</dbReference>
<dbReference type="SUPFAM" id="SSF55315">
    <property type="entry name" value="L30e-like"/>
    <property type="match status" value="1"/>
</dbReference>
<dbReference type="SUPFAM" id="SSF55481">
    <property type="entry name" value="N-terminal domain of eukaryotic peptide chain release factor subunit 1, ERF1"/>
    <property type="match status" value="1"/>
</dbReference>
<dbReference type="SUPFAM" id="SSF53137">
    <property type="entry name" value="Translational machinery components"/>
    <property type="match status" value="1"/>
</dbReference>
<evidence type="ECO:0000255" key="1">
    <source>
        <dbReference type="HAMAP-Rule" id="MF_00424"/>
    </source>
</evidence>
<comment type="function">
    <text evidence="1">Directs the termination of nascent peptide synthesis (translation) in response to the termination codons UAA, UAG and UGA.</text>
</comment>
<comment type="subunit">
    <text evidence="1">Heterodimer of two subunits, one of which binds GTP.</text>
</comment>
<comment type="subcellular location">
    <subcellularLocation>
        <location evidence="1">Cytoplasm</location>
    </subcellularLocation>
</comment>
<comment type="similarity">
    <text evidence="1">Belongs to the eukaryotic release factor 1 family.</text>
</comment>
<name>RF1_METM6</name>
<feature type="chain" id="PRO_1000193544" description="Peptide chain release factor subunit 1">
    <location>
        <begin position="1"/>
        <end position="419"/>
    </location>
</feature>
<accession>A9AAH5</accession>
<proteinExistence type="inferred from homology"/>
<keyword id="KW-0963">Cytoplasm</keyword>
<keyword id="KW-0648">Protein biosynthesis</keyword>
<reference key="1">
    <citation type="submission" date="2007-10" db="EMBL/GenBank/DDBJ databases">
        <title>Complete sequence of Methanococcus maripaludis C6.</title>
        <authorList>
            <consortium name="US DOE Joint Genome Institute"/>
            <person name="Copeland A."/>
            <person name="Lucas S."/>
            <person name="Lapidus A."/>
            <person name="Barry K."/>
            <person name="Glavina del Rio T."/>
            <person name="Dalin E."/>
            <person name="Tice H."/>
            <person name="Pitluck S."/>
            <person name="Clum A."/>
            <person name="Schmutz J."/>
            <person name="Larimer F."/>
            <person name="Land M."/>
            <person name="Hauser L."/>
            <person name="Kyrpides N."/>
            <person name="Mikhailova N."/>
            <person name="Sieprawska-Lupa M."/>
            <person name="Whitman W.B."/>
            <person name="Richardson P."/>
        </authorList>
    </citation>
    <scope>NUCLEOTIDE SEQUENCE [LARGE SCALE GENOMIC DNA]</scope>
    <source>
        <strain>C6 / ATCC BAA-1332</strain>
    </source>
</reference>
<gene>
    <name evidence="1" type="primary">prf1</name>
    <name type="ordered locus">MmarC6_1536</name>
</gene>